<name>SAHH_MARMM</name>
<evidence type="ECO:0000255" key="1">
    <source>
        <dbReference type="HAMAP-Rule" id="MF_00563"/>
    </source>
</evidence>
<sequence length="469" mass="51834">MTQFAADKPYIVKDMSLAKWGRIEFDMAEIEMPGLMALREEYKDSQPLKGARIAGSLHMTVQTAILIETLTALGAEVRWASCNIFSTQDHAAAAIAETGVPVFATKGETLEEYWDYADAIFHWPDGETANMILDDGGDATMYLILGEKAENDPSVLNHPKSEEETFLFAQIKKRIAATPGWFAKAKAAIQGVSEETTTGVMRLYQMQKRGELPFPAINVNDSVTKSKFDNRYGCRESLVDAIRRGTDVMMAGKKALVFGYGDVGKGSAESLAGAGARVYVTEIDPICALQACMDGFEVVRAEDVIGEMDIFVTATGNKDILTVDHMRAMKDMAIVCNIGHFDNEIQVESLKNYQWTNVKPQVDLVNFPEGHRIILLSEGRLVNLGNATGHPSFVMSASFTNQTLAQIELWTKGENYTNEVYILPKHLDEKVAALHLDKLGAKLTVLSDEQADYIGVPQHGPFKAEHYRY</sequence>
<protein>
    <recommendedName>
        <fullName evidence="1">Adenosylhomocysteinase</fullName>
        <ecNumber evidence="1">3.13.2.1</ecNumber>
    </recommendedName>
    <alternativeName>
        <fullName evidence="1">S-adenosyl-L-homocysteine hydrolase</fullName>
        <shortName evidence="1">AdoHcyase</shortName>
    </alternativeName>
</protein>
<feature type="chain" id="PRO_1000061127" description="Adenosylhomocysteinase">
    <location>
        <begin position="1"/>
        <end position="469"/>
    </location>
</feature>
<feature type="binding site" evidence="1">
    <location>
        <position position="60"/>
    </location>
    <ligand>
        <name>substrate</name>
    </ligand>
</feature>
<feature type="binding site" evidence="1">
    <location>
        <position position="135"/>
    </location>
    <ligand>
        <name>substrate</name>
    </ligand>
</feature>
<feature type="binding site" evidence="1">
    <location>
        <position position="195"/>
    </location>
    <ligand>
        <name>substrate</name>
    </ligand>
</feature>
<feature type="binding site" evidence="1">
    <location>
        <begin position="196"/>
        <end position="198"/>
    </location>
    <ligand>
        <name>NAD(+)</name>
        <dbReference type="ChEBI" id="CHEBI:57540"/>
    </ligand>
</feature>
<feature type="binding site" evidence="1">
    <location>
        <position position="225"/>
    </location>
    <ligand>
        <name>substrate</name>
    </ligand>
</feature>
<feature type="binding site" evidence="1">
    <location>
        <position position="229"/>
    </location>
    <ligand>
        <name>substrate</name>
    </ligand>
</feature>
<feature type="binding site" evidence="1">
    <location>
        <position position="230"/>
    </location>
    <ligand>
        <name>NAD(+)</name>
        <dbReference type="ChEBI" id="CHEBI:57540"/>
    </ligand>
</feature>
<feature type="binding site" evidence="1">
    <location>
        <begin position="259"/>
        <end position="264"/>
    </location>
    <ligand>
        <name>NAD(+)</name>
        <dbReference type="ChEBI" id="CHEBI:57540"/>
    </ligand>
</feature>
<feature type="binding site" evidence="1">
    <location>
        <position position="282"/>
    </location>
    <ligand>
        <name>NAD(+)</name>
        <dbReference type="ChEBI" id="CHEBI:57540"/>
    </ligand>
</feature>
<feature type="binding site" evidence="1">
    <location>
        <position position="317"/>
    </location>
    <ligand>
        <name>NAD(+)</name>
        <dbReference type="ChEBI" id="CHEBI:57540"/>
    </ligand>
</feature>
<feature type="binding site" evidence="1">
    <location>
        <begin position="338"/>
        <end position="340"/>
    </location>
    <ligand>
        <name>NAD(+)</name>
        <dbReference type="ChEBI" id="CHEBI:57540"/>
    </ligand>
</feature>
<feature type="binding site" evidence="1">
    <location>
        <position position="383"/>
    </location>
    <ligand>
        <name>NAD(+)</name>
        <dbReference type="ChEBI" id="CHEBI:57540"/>
    </ligand>
</feature>
<comment type="function">
    <text evidence="1">May play a key role in the regulation of the intracellular concentration of adenosylhomocysteine.</text>
</comment>
<comment type="catalytic activity">
    <reaction evidence="1">
        <text>S-adenosyl-L-homocysteine + H2O = L-homocysteine + adenosine</text>
        <dbReference type="Rhea" id="RHEA:21708"/>
        <dbReference type="ChEBI" id="CHEBI:15377"/>
        <dbReference type="ChEBI" id="CHEBI:16335"/>
        <dbReference type="ChEBI" id="CHEBI:57856"/>
        <dbReference type="ChEBI" id="CHEBI:58199"/>
        <dbReference type="EC" id="3.13.2.1"/>
    </reaction>
</comment>
<comment type="cofactor">
    <cofactor evidence="1">
        <name>NAD(+)</name>
        <dbReference type="ChEBI" id="CHEBI:57540"/>
    </cofactor>
    <text evidence="1">Binds 1 NAD(+) per subunit.</text>
</comment>
<comment type="pathway">
    <text evidence="1">Amino-acid biosynthesis; L-homocysteine biosynthesis; L-homocysteine from S-adenosyl-L-homocysteine: step 1/1.</text>
</comment>
<comment type="subcellular location">
    <subcellularLocation>
        <location evidence="1">Cytoplasm</location>
    </subcellularLocation>
</comment>
<comment type="similarity">
    <text evidence="1">Belongs to the adenosylhomocysteinase family.</text>
</comment>
<accession>Q0ALW1</accession>
<keyword id="KW-0963">Cytoplasm</keyword>
<keyword id="KW-0378">Hydrolase</keyword>
<keyword id="KW-0520">NAD</keyword>
<keyword id="KW-0554">One-carbon metabolism</keyword>
<keyword id="KW-1185">Reference proteome</keyword>
<dbReference type="EC" id="3.13.2.1" evidence="1"/>
<dbReference type="EMBL" id="CP000449">
    <property type="protein sequence ID" value="ABI66732.1"/>
    <property type="molecule type" value="Genomic_DNA"/>
</dbReference>
<dbReference type="RefSeq" id="WP_011644377.1">
    <property type="nucleotide sequence ID" value="NC_008347.1"/>
</dbReference>
<dbReference type="SMR" id="Q0ALW1"/>
<dbReference type="STRING" id="394221.Mmar10_2440"/>
<dbReference type="KEGG" id="mmr:Mmar10_2440"/>
<dbReference type="eggNOG" id="COG0499">
    <property type="taxonomic scope" value="Bacteria"/>
</dbReference>
<dbReference type="HOGENOM" id="CLU_025194_2_0_5"/>
<dbReference type="OrthoDB" id="9802717at2"/>
<dbReference type="UniPathway" id="UPA00314">
    <property type="reaction ID" value="UER00076"/>
</dbReference>
<dbReference type="Proteomes" id="UP000001964">
    <property type="component" value="Chromosome"/>
</dbReference>
<dbReference type="GO" id="GO:0005829">
    <property type="term" value="C:cytosol"/>
    <property type="evidence" value="ECO:0007669"/>
    <property type="project" value="TreeGrafter"/>
</dbReference>
<dbReference type="GO" id="GO:0004013">
    <property type="term" value="F:adenosylhomocysteinase activity"/>
    <property type="evidence" value="ECO:0007669"/>
    <property type="project" value="UniProtKB-UniRule"/>
</dbReference>
<dbReference type="GO" id="GO:0071269">
    <property type="term" value="P:L-homocysteine biosynthetic process"/>
    <property type="evidence" value="ECO:0007669"/>
    <property type="project" value="UniProtKB-UniRule"/>
</dbReference>
<dbReference type="GO" id="GO:0006730">
    <property type="term" value="P:one-carbon metabolic process"/>
    <property type="evidence" value="ECO:0007669"/>
    <property type="project" value="UniProtKB-KW"/>
</dbReference>
<dbReference type="GO" id="GO:0033353">
    <property type="term" value="P:S-adenosylmethionine cycle"/>
    <property type="evidence" value="ECO:0007669"/>
    <property type="project" value="TreeGrafter"/>
</dbReference>
<dbReference type="CDD" id="cd00401">
    <property type="entry name" value="SAHH"/>
    <property type="match status" value="1"/>
</dbReference>
<dbReference type="FunFam" id="3.40.50.720:FF:000004">
    <property type="entry name" value="Adenosylhomocysteinase"/>
    <property type="match status" value="1"/>
</dbReference>
<dbReference type="Gene3D" id="3.40.50.1480">
    <property type="entry name" value="Adenosylhomocysteinase-like"/>
    <property type="match status" value="1"/>
</dbReference>
<dbReference type="Gene3D" id="3.40.50.720">
    <property type="entry name" value="NAD(P)-binding Rossmann-like Domain"/>
    <property type="match status" value="1"/>
</dbReference>
<dbReference type="HAMAP" id="MF_00563">
    <property type="entry name" value="AdoHcyase"/>
    <property type="match status" value="1"/>
</dbReference>
<dbReference type="InterPro" id="IPR042172">
    <property type="entry name" value="Adenosylhomocyst_ase-like_sf"/>
</dbReference>
<dbReference type="InterPro" id="IPR000043">
    <property type="entry name" value="Adenosylhomocysteinase-like"/>
</dbReference>
<dbReference type="InterPro" id="IPR015878">
    <property type="entry name" value="Ado_hCys_hydrolase_NAD-bd"/>
</dbReference>
<dbReference type="InterPro" id="IPR036291">
    <property type="entry name" value="NAD(P)-bd_dom_sf"/>
</dbReference>
<dbReference type="InterPro" id="IPR020082">
    <property type="entry name" value="S-Ado-L-homoCys_hydrolase_CS"/>
</dbReference>
<dbReference type="NCBIfam" id="TIGR00936">
    <property type="entry name" value="ahcY"/>
    <property type="match status" value="1"/>
</dbReference>
<dbReference type="NCBIfam" id="NF004005">
    <property type="entry name" value="PRK05476.2-3"/>
    <property type="match status" value="1"/>
</dbReference>
<dbReference type="PANTHER" id="PTHR23420">
    <property type="entry name" value="ADENOSYLHOMOCYSTEINASE"/>
    <property type="match status" value="1"/>
</dbReference>
<dbReference type="PANTHER" id="PTHR23420:SF0">
    <property type="entry name" value="ADENOSYLHOMOCYSTEINASE"/>
    <property type="match status" value="1"/>
</dbReference>
<dbReference type="Pfam" id="PF05221">
    <property type="entry name" value="AdoHcyase"/>
    <property type="match status" value="1"/>
</dbReference>
<dbReference type="Pfam" id="PF00670">
    <property type="entry name" value="AdoHcyase_NAD"/>
    <property type="match status" value="1"/>
</dbReference>
<dbReference type="PIRSF" id="PIRSF001109">
    <property type="entry name" value="Ad_hcy_hydrolase"/>
    <property type="match status" value="1"/>
</dbReference>
<dbReference type="SMART" id="SM00996">
    <property type="entry name" value="AdoHcyase"/>
    <property type="match status" value="1"/>
</dbReference>
<dbReference type="SMART" id="SM00997">
    <property type="entry name" value="AdoHcyase_NAD"/>
    <property type="match status" value="1"/>
</dbReference>
<dbReference type="SUPFAM" id="SSF52283">
    <property type="entry name" value="Formate/glycerate dehydrogenase catalytic domain-like"/>
    <property type="match status" value="1"/>
</dbReference>
<dbReference type="SUPFAM" id="SSF51735">
    <property type="entry name" value="NAD(P)-binding Rossmann-fold domains"/>
    <property type="match status" value="1"/>
</dbReference>
<dbReference type="PROSITE" id="PS00738">
    <property type="entry name" value="ADOHCYASE_1"/>
    <property type="match status" value="1"/>
</dbReference>
<dbReference type="PROSITE" id="PS00739">
    <property type="entry name" value="ADOHCYASE_2"/>
    <property type="match status" value="1"/>
</dbReference>
<proteinExistence type="inferred from homology"/>
<reference key="1">
    <citation type="submission" date="2006-08" db="EMBL/GenBank/DDBJ databases">
        <title>Complete sequence of Maricaulis maris MCS10.</title>
        <authorList>
            <consortium name="US DOE Joint Genome Institute"/>
            <person name="Copeland A."/>
            <person name="Lucas S."/>
            <person name="Lapidus A."/>
            <person name="Barry K."/>
            <person name="Detter J.C."/>
            <person name="Glavina del Rio T."/>
            <person name="Hammon N."/>
            <person name="Israni S."/>
            <person name="Dalin E."/>
            <person name="Tice H."/>
            <person name="Pitluck S."/>
            <person name="Saunders E."/>
            <person name="Brettin T."/>
            <person name="Bruce D."/>
            <person name="Han C."/>
            <person name="Tapia R."/>
            <person name="Gilna P."/>
            <person name="Schmutz J."/>
            <person name="Larimer F."/>
            <person name="Land M."/>
            <person name="Hauser L."/>
            <person name="Kyrpides N."/>
            <person name="Mikhailova N."/>
            <person name="Viollier P."/>
            <person name="Stephens C."/>
            <person name="Richardson P."/>
        </authorList>
    </citation>
    <scope>NUCLEOTIDE SEQUENCE [LARGE SCALE GENOMIC DNA]</scope>
    <source>
        <strain>MCS10</strain>
    </source>
</reference>
<gene>
    <name evidence="1" type="primary">ahcY</name>
    <name type="ordered locus">Mmar10_2440</name>
</gene>
<organism>
    <name type="scientific">Maricaulis maris (strain MCS10)</name>
    <name type="common">Caulobacter maris</name>
    <dbReference type="NCBI Taxonomy" id="394221"/>
    <lineage>
        <taxon>Bacteria</taxon>
        <taxon>Pseudomonadati</taxon>
        <taxon>Pseudomonadota</taxon>
        <taxon>Alphaproteobacteria</taxon>
        <taxon>Maricaulales</taxon>
        <taxon>Maricaulaceae</taxon>
        <taxon>Maricaulis</taxon>
    </lineage>
</organism>